<proteinExistence type="evidence at protein level"/>
<name>XBP1_YEAST</name>
<reference key="1">
    <citation type="journal article" date="1997" name="Nature">
        <title>The nucleotide sequence of Saccharomyces cerevisiae chromosome IX.</title>
        <authorList>
            <person name="Churcher C.M."/>
            <person name="Bowman S."/>
            <person name="Badcock K."/>
            <person name="Bankier A.T."/>
            <person name="Brown D."/>
            <person name="Chillingworth T."/>
            <person name="Connor R."/>
            <person name="Devlin K."/>
            <person name="Gentles S."/>
            <person name="Hamlin N."/>
            <person name="Harris D.E."/>
            <person name="Horsnell T."/>
            <person name="Hunt S."/>
            <person name="Jagels K."/>
            <person name="Jones M."/>
            <person name="Lye G."/>
            <person name="Moule S."/>
            <person name="Odell C."/>
            <person name="Pearson D."/>
            <person name="Rajandream M.A."/>
            <person name="Rice P."/>
            <person name="Rowley N."/>
            <person name="Skelton J."/>
            <person name="Smith V."/>
            <person name="Walsh S.V."/>
            <person name="Whitehead S."/>
            <person name="Barrell B.G."/>
        </authorList>
    </citation>
    <scope>NUCLEOTIDE SEQUENCE [LARGE SCALE GENOMIC DNA]</scope>
    <source>
        <strain>ATCC 204508 / S288c</strain>
    </source>
</reference>
<reference key="2">
    <citation type="journal article" date="2014" name="G3 (Bethesda)">
        <title>The reference genome sequence of Saccharomyces cerevisiae: Then and now.</title>
        <authorList>
            <person name="Engel S.R."/>
            <person name="Dietrich F.S."/>
            <person name="Fisk D.G."/>
            <person name="Binkley G."/>
            <person name="Balakrishnan R."/>
            <person name="Costanzo M.C."/>
            <person name="Dwight S.S."/>
            <person name="Hitz B.C."/>
            <person name="Karra K."/>
            <person name="Nash R.S."/>
            <person name="Weng S."/>
            <person name="Wong E.D."/>
            <person name="Lloyd P."/>
            <person name="Skrzypek M.S."/>
            <person name="Miyasato S.R."/>
            <person name="Simison M."/>
            <person name="Cherry J.M."/>
        </authorList>
    </citation>
    <scope>GENOME REANNOTATION</scope>
    <source>
        <strain>ATCC 204508 / S288c</strain>
    </source>
</reference>
<reference key="3">
    <citation type="journal article" date="1988" name="FEBS Lett.">
        <title>Similar short elements in the 5' regions of the STA2 and SGA genes from Saccharomyces cerevisiae.</title>
        <authorList>
            <person name="Pardo J.M."/>
            <person name="Ianez E."/>
            <person name="Zalacain M."/>
            <person name="Claros M.G."/>
            <person name="Jimenez A."/>
        </authorList>
    </citation>
    <scope>NUCLEOTIDE SEQUENCE [GENOMIC DNA] OF 1-241</scope>
    <source>
        <strain>SPX101-1C</strain>
    </source>
</reference>
<reference key="4">
    <citation type="journal article" date="1997" name="Mol. Cell. Biol.">
        <title>Xbp1, a stress-induced transcriptional repressor of the Saccharomyces cerevisiae Swi4/Mbp1 family.</title>
        <authorList>
            <person name="Mai B."/>
            <person name="Breeden L."/>
        </authorList>
    </citation>
    <scope>FUNCTION</scope>
    <scope>INDUCTION</scope>
</reference>
<reference key="5">
    <citation type="journal article" date="2003" name="Nature">
        <title>Global analysis of protein expression in yeast.</title>
        <authorList>
            <person name="Ghaemmaghami S."/>
            <person name="Huh W.-K."/>
            <person name="Bower K."/>
            <person name="Howson R.W."/>
            <person name="Belle A."/>
            <person name="Dephoure N."/>
            <person name="O'Shea E.K."/>
            <person name="Weissman J.S."/>
        </authorList>
    </citation>
    <scope>LEVEL OF PROTEIN EXPRESSION [LARGE SCALE ANALYSIS]</scope>
</reference>
<reference key="6">
    <citation type="journal article" date="2008" name="Mol. Cell. Proteomics">
        <title>A multidimensional chromatography technology for in-depth phosphoproteome analysis.</title>
        <authorList>
            <person name="Albuquerque C.P."/>
            <person name="Smolka M.B."/>
            <person name="Payne S.H."/>
            <person name="Bafna V."/>
            <person name="Eng J."/>
            <person name="Zhou H."/>
        </authorList>
    </citation>
    <scope>IDENTIFICATION BY MASS SPECTROMETRY [LARGE SCALE ANALYSIS]</scope>
</reference>
<comment type="function">
    <text evidence="4">Transcriptional repressor which binds to the consensus sequence 5'-GCCTCGA[G/A]G[C/A]-3'. Represses CLN1 transcription.</text>
</comment>
<comment type="subcellular location">
    <subcellularLocation>
        <location evidence="5">Nucleus</location>
    </subcellularLocation>
</comment>
<comment type="induction">
    <text evidence="4">By heat shock, high osmolarity, oxidative stress, DNA damage and glucose starvation.</text>
</comment>
<comment type="miscellaneous">
    <text evidence="3">Present with 195 molecules/cell in log phase SD medium.</text>
</comment>
<sequence>MKYPAFSINSDTVHLTDNPLDDYQRLYLVSVLDRDSPPASFSAGLNIRKVNYKSSIAAQFTHPNFIISARDAGNGEEAAAQNVLNCFEYQFPNLQTIQSLVHEQTLLSQLASSATPHSALHLHDKNILMGKIILPSRSNKTPVSASPTKQEKKALSTASRENATSSLTKNQQFKLTKMDHNLINDKLINPNNCVIWSHDSGYVFMTGIWRLYQDVMKGLINLPRGDSVSTSQQQFFCKAEFEKILSFCFYNHSSFTSEESSSVLLSSSTSSPPKRRTSTGSTFLDANASSSSTSSTQANNYIDFHWNNIKPELRDLICQSYKDFLINELGPDQIDLPNLNPANFTKRIRGGYIKIQGTWLPMEISRLLCLRFCFPIRYFLVPIFGPDFPKDCESWYLAHQNVTFASSTTGAGAATAATAAANTSTNFTSTAVARPRQKPRPRPRQRSTSMSHSKAQKLVIEDALPSFDSFVENLGLSSNDKNFIKKNSKRQKSSTYTSQTSSPIGPRDPTVQILSNLASFYNTHGHRYSYPGNIYIPQQRYSLPPPNQLSSPQRQLNYTYDHIHPVPSQYQSPRHYNVPSSPIAPAPPTFPQPYGDDHYHFLKYASEVYKQQNQRPAHNTNTNMDTSFSPRANNSLNNFKFKTNSKQ</sequence>
<keyword id="KW-0238">DNA-binding</keyword>
<keyword id="KW-0539">Nucleus</keyword>
<keyword id="KW-1185">Reference proteome</keyword>
<keyword id="KW-0678">Repressor</keyword>
<keyword id="KW-0346">Stress response</keyword>
<keyword id="KW-0804">Transcription</keyword>
<keyword id="KW-0805">Transcription regulation</keyword>
<dbReference type="EMBL" id="Z38125">
    <property type="protein sequence ID" value="CAA86279.1"/>
    <property type="molecule type" value="Genomic_DNA"/>
</dbReference>
<dbReference type="EMBL" id="X13858">
    <property type="protein sequence ID" value="CAA32070.1"/>
    <property type="status" value="ALT_SEQ"/>
    <property type="molecule type" value="Genomic_DNA"/>
</dbReference>
<dbReference type="EMBL" id="BK006942">
    <property type="protein sequence ID" value="DAA08453.1"/>
    <property type="molecule type" value="Genomic_DNA"/>
</dbReference>
<dbReference type="PIR" id="S48471">
    <property type="entry name" value="S48471"/>
</dbReference>
<dbReference type="RefSeq" id="NP_012165.1">
    <property type="nucleotide sequence ID" value="NM_001179449.1"/>
</dbReference>
<dbReference type="BioGRID" id="34891">
    <property type="interactions" value="77"/>
</dbReference>
<dbReference type="DIP" id="DIP-7587N"/>
<dbReference type="FunCoup" id="P40489">
    <property type="interactions" value="1594"/>
</dbReference>
<dbReference type="IntAct" id="P40489">
    <property type="interactions" value="6"/>
</dbReference>
<dbReference type="MINT" id="P40489"/>
<dbReference type="STRING" id="4932.YIL101C"/>
<dbReference type="iPTMnet" id="P40489"/>
<dbReference type="PaxDb" id="4932-YIL101C"/>
<dbReference type="PeptideAtlas" id="P40489"/>
<dbReference type="EnsemblFungi" id="YIL101C_mRNA">
    <property type="protein sequence ID" value="YIL101C"/>
    <property type="gene ID" value="YIL101C"/>
</dbReference>
<dbReference type="GeneID" id="854706"/>
<dbReference type="KEGG" id="sce:YIL101C"/>
<dbReference type="AGR" id="SGD:S000001363"/>
<dbReference type="SGD" id="S000001363">
    <property type="gene designation" value="XBP1"/>
</dbReference>
<dbReference type="VEuPathDB" id="FungiDB:YIL101C"/>
<dbReference type="eggNOG" id="ENOG502S1IW">
    <property type="taxonomic scope" value="Eukaryota"/>
</dbReference>
<dbReference type="HOGENOM" id="CLU_451446_0_0_1"/>
<dbReference type="InParanoid" id="P40489"/>
<dbReference type="OMA" id="ESWYLAH"/>
<dbReference type="OrthoDB" id="5562739at2759"/>
<dbReference type="BioCyc" id="YEAST:G3O-31358-MONOMER"/>
<dbReference type="BioGRID-ORCS" id="854706">
    <property type="hits" value="6 hits in 13 CRISPR screens"/>
</dbReference>
<dbReference type="PRO" id="PR:P40489"/>
<dbReference type="Proteomes" id="UP000002311">
    <property type="component" value="Chromosome IX"/>
</dbReference>
<dbReference type="RNAct" id="P40489">
    <property type="molecule type" value="protein"/>
</dbReference>
<dbReference type="GO" id="GO:0005737">
    <property type="term" value="C:cytoplasm"/>
    <property type="evidence" value="ECO:0007005"/>
    <property type="project" value="SGD"/>
</dbReference>
<dbReference type="GO" id="GO:0030907">
    <property type="term" value="C:MBF transcription complex"/>
    <property type="evidence" value="ECO:0000318"/>
    <property type="project" value="GO_Central"/>
</dbReference>
<dbReference type="GO" id="GO:0005634">
    <property type="term" value="C:nucleus"/>
    <property type="evidence" value="ECO:0000314"/>
    <property type="project" value="SGD"/>
</dbReference>
<dbReference type="GO" id="GO:0033309">
    <property type="term" value="C:SBF transcription complex"/>
    <property type="evidence" value="ECO:0000318"/>
    <property type="project" value="GO_Central"/>
</dbReference>
<dbReference type="GO" id="GO:0001228">
    <property type="term" value="F:DNA-binding transcription activator activity, RNA polymerase II-specific"/>
    <property type="evidence" value="ECO:0000318"/>
    <property type="project" value="GO_Central"/>
</dbReference>
<dbReference type="GO" id="GO:0003700">
    <property type="term" value="F:DNA-binding transcription factor activity"/>
    <property type="evidence" value="ECO:0000314"/>
    <property type="project" value="SGD"/>
</dbReference>
<dbReference type="GO" id="GO:0000981">
    <property type="term" value="F:DNA-binding transcription factor activity, RNA polymerase II-specific"/>
    <property type="evidence" value="ECO:0000314"/>
    <property type="project" value="SGD"/>
</dbReference>
<dbReference type="GO" id="GO:0043565">
    <property type="term" value="F:sequence-specific DNA binding"/>
    <property type="evidence" value="ECO:0007005"/>
    <property type="project" value="SGD"/>
</dbReference>
<dbReference type="GO" id="GO:0042149">
    <property type="term" value="P:cellular response to glucose starvation"/>
    <property type="evidence" value="ECO:0000315"/>
    <property type="project" value="SGD"/>
</dbReference>
<dbReference type="GO" id="GO:0034605">
    <property type="term" value="P:cellular response to heat"/>
    <property type="evidence" value="ECO:0000315"/>
    <property type="project" value="SGD"/>
</dbReference>
<dbReference type="GO" id="GO:0006995">
    <property type="term" value="P:cellular response to nitrogen starvation"/>
    <property type="evidence" value="ECO:0000315"/>
    <property type="project" value="SGD"/>
</dbReference>
<dbReference type="GO" id="GO:0071470">
    <property type="term" value="P:cellular response to osmotic stress"/>
    <property type="evidence" value="ECO:0000315"/>
    <property type="project" value="SGD"/>
</dbReference>
<dbReference type="GO" id="GO:0070314">
    <property type="term" value="P:G1 to G0 transition"/>
    <property type="evidence" value="ECO:0000315"/>
    <property type="project" value="SGD"/>
</dbReference>
<dbReference type="GO" id="GO:0051321">
    <property type="term" value="P:meiotic cell cycle"/>
    <property type="evidence" value="ECO:0000315"/>
    <property type="project" value="SGD"/>
</dbReference>
<dbReference type="GO" id="GO:0000122">
    <property type="term" value="P:negative regulation of transcription by RNA polymerase II"/>
    <property type="evidence" value="ECO:0000315"/>
    <property type="project" value="SGD"/>
</dbReference>
<dbReference type="GO" id="GO:0045944">
    <property type="term" value="P:positive regulation of transcription by RNA polymerase II"/>
    <property type="evidence" value="ECO:0000318"/>
    <property type="project" value="GO_Central"/>
</dbReference>
<dbReference type="FunFam" id="3.10.260.10:FF:000008">
    <property type="entry name" value="Transcriptional repressor"/>
    <property type="match status" value="1"/>
</dbReference>
<dbReference type="Gene3D" id="3.10.260.10">
    <property type="entry name" value="Transcription regulator HTH, APSES-type DNA-binding domain"/>
    <property type="match status" value="1"/>
</dbReference>
<dbReference type="InterPro" id="IPR036887">
    <property type="entry name" value="HTH_APSES_sf"/>
</dbReference>
<dbReference type="InterPro" id="IPR051642">
    <property type="entry name" value="SWI6-like"/>
</dbReference>
<dbReference type="InterPro" id="IPR003163">
    <property type="entry name" value="Tscrpt_reg_HTH_APSES-type"/>
</dbReference>
<dbReference type="PANTHER" id="PTHR43828">
    <property type="entry name" value="ASPARAGINASE"/>
    <property type="match status" value="1"/>
</dbReference>
<dbReference type="PANTHER" id="PTHR43828:SF5">
    <property type="entry name" value="TRANSCRIPTIONAL REPRESSOR XBP1"/>
    <property type="match status" value="1"/>
</dbReference>
<dbReference type="SUPFAM" id="SSF54616">
    <property type="entry name" value="DNA-binding domain of Mlu1-box binding protein MBP1"/>
    <property type="match status" value="1"/>
</dbReference>
<dbReference type="PROSITE" id="PS51299">
    <property type="entry name" value="HTH_APSES"/>
    <property type="match status" value="1"/>
</dbReference>
<feature type="chain" id="PRO_0000066004" description="Transcriptional repressor XBP1">
    <location>
        <begin position="1"/>
        <end position="647"/>
    </location>
</feature>
<feature type="domain" description="HTH APSES-type" evidence="1">
    <location>
        <begin position="282"/>
        <end position="395"/>
    </location>
</feature>
<feature type="DNA-binding region" description="H-T-H motif" evidence="1">
    <location>
        <begin position="318"/>
        <end position="339"/>
    </location>
</feature>
<feature type="region of interest" description="Disordered" evidence="2">
    <location>
        <begin position="138"/>
        <end position="170"/>
    </location>
</feature>
<feature type="region of interest" description="Disordered" evidence="2">
    <location>
        <begin position="264"/>
        <end position="295"/>
    </location>
</feature>
<feature type="region of interest" description="Disordered" evidence="2">
    <location>
        <begin position="425"/>
        <end position="455"/>
    </location>
</feature>
<feature type="region of interest" description="Disordered" evidence="2">
    <location>
        <begin position="485"/>
        <end position="508"/>
    </location>
</feature>
<feature type="region of interest" description="Disordered" evidence="2">
    <location>
        <begin position="612"/>
        <end position="647"/>
    </location>
</feature>
<feature type="compositionally biased region" description="Polar residues" evidence="2">
    <location>
        <begin position="138"/>
        <end position="148"/>
    </location>
</feature>
<feature type="compositionally biased region" description="Polar residues" evidence="2">
    <location>
        <begin position="156"/>
        <end position="170"/>
    </location>
</feature>
<feature type="compositionally biased region" description="Low complexity" evidence="2">
    <location>
        <begin position="264"/>
        <end position="282"/>
    </location>
</feature>
<feature type="compositionally biased region" description="Low complexity" evidence="2">
    <location>
        <begin position="425"/>
        <end position="434"/>
    </location>
</feature>
<feature type="compositionally biased region" description="Basic residues" evidence="2">
    <location>
        <begin position="435"/>
        <end position="445"/>
    </location>
</feature>
<feature type="compositionally biased region" description="Low complexity" evidence="2">
    <location>
        <begin position="493"/>
        <end position="502"/>
    </location>
</feature>
<feature type="sequence conflict" description="In Ref. 3; CAA32070." evidence="5" ref="3">
    <original>LL</original>
    <variation>FV</variation>
    <location>
        <begin position="106"/>
        <end position="107"/>
    </location>
</feature>
<organism>
    <name type="scientific">Saccharomyces cerevisiae (strain ATCC 204508 / S288c)</name>
    <name type="common">Baker's yeast</name>
    <dbReference type="NCBI Taxonomy" id="559292"/>
    <lineage>
        <taxon>Eukaryota</taxon>
        <taxon>Fungi</taxon>
        <taxon>Dikarya</taxon>
        <taxon>Ascomycota</taxon>
        <taxon>Saccharomycotina</taxon>
        <taxon>Saccharomycetes</taxon>
        <taxon>Saccharomycetales</taxon>
        <taxon>Saccharomycetaceae</taxon>
        <taxon>Saccharomyces</taxon>
    </lineage>
</organism>
<accession>P40489</accession>
<accession>D6VVI7</accession>
<accession>Q12688</accession>
<evidence type="ECO:0000255" key="1">
    <source>
        <dbReference type="PROSITE-ProRule" id="PRU00630"/>
    </source>
</evidence>
<evidence type="ECO:0000256" key="2">
    <source>
        <dbReference type="SAM" id="MobiDB-lite"/>
    </source>
</evidence>
<evidence type="ECO:0000269" key="3">
    <source>
    </source>
</evidence>
<evidence type="ECO:0000269" key="4">
    <source>
    </source>
</evidence>
<evidence type="ECO:0000305" key="5"/>
<gene>
    <name type="primary">XBP1</name>
    <name type="ordered locus">YIL101C</name>
</gene>
<protein>
    <recommendedName>
        <fullName>Transcriptional repressor XBP1</fullName>
    </recommendedName>
    <alternativeName>
        <fullName>XhoI site-binding protein 1</fullName>
    </alternativeName>
</protein>